<organism>
    <name type="scientific">Pectobacterium carotovorum subsp. carotovorum (strain PC1)</name>
    <dbReference type="NCBI Taxonomy" id="561230"/>
    <lineage>
        <taxon>Bacteria</taxon>
        <taxon>Pseudomonadati</taxon>
        <taxon>Pseudomonadota</taxon>
        <taxon>Gammaproteobacteria</taxon>
        <taxon>Enterobacterales</taxon>
        <taxon>Pectobacteriaceae</taxon>
        <taxon>Pectobacterium</taxon>
    </lineage>
</organism>
<proteinExistence type="inferred from homology"/>
<comment type="function">
    <text evidence="1">Binds to the 23S rRNA.</text>
</comment>
<comment type="similarity">
    <text evidence="1">Belongs to the bacterial ribosomal protein bL9 family.</text>
</comment>
<name>RL9_PECCP</name>
<sequence length="150" mass="15754">MQVILLDKVANLGSLGDQVNVKAGYARNFLVPQGKAVPATKKNVEFFEARRAELEAKLADVLAAAEARAAKIKELGSVTIASKAGDEGKLFGSIGTRDIADAVTAAGVDIAKSEVRLPNGVLRTLGEHEVSFQVHSDVFAELNVVVVAEA</sequence>
<protein>
    <recommendedName>
        <fullName evidence="1">Large ribosomal subunit protein bL9</fullName>
    </recommendedName>
    <alternativeName>
        <fullName evidence="2">50S ribosomal protein L9</fullName>
    </alternativeName>
</protein>
<accession>C6DE12</accession>
<gene>
    <name evidence="1" type="primary">rplI</name>
    <name type="ordered locus">PC1_3432</name>
</gene>
<feature type="chain" id="PRO_1000206557" description="Large ribosomal subunit protein bL9">
    <location>
        <begin position="1"/>
        <end position="150"/>
    </location>
</feature>
<keyword id="KW-0687">Ribonucleoprotein</keyword>
<keyword id="KW-0689">Ribosomal protein</keyword>
<keyword id="KW-0694">RNA-binding</keyword>
<keyword id="KW-0699">rRNA-binding</keyword>
<evidence type="ECO:0000255" key="1">
    <source>
        <dbReference type="HAMAP-Rule" id="MF_00503"/>
    </source>
</evidence>
<evidence type="ECO:0000305" key="2"/>
<reference key="1">
    <citation type="submission" date="2009-07" db="EMBL/GenBank/DDBJ databases">
        <title>Complete sequence of Pectobacterium carotovorum subsp. carotovorum PC1.</title>
        <authorList>
            <consortium name="US DOE Joint Genome Institute"/>
            <person name="Lucas S."/>
            <person name="Copeland A."/>
            <person name="Lapidus A."/>
            <person name="Glavina del Rio T."/>
            <person name="Tice H."/>
            <person name="Bruce D."/>
            <person name="Goodwin L."/>
            <person name="Pitluck S."/>
            <person name="Munk A.C."/>
            <person name="Brettin T."/>
            <person name="Detter J.C."/>
            <person name="Han C."/>
            <person name="Tapia R."/>
            <person name="Larimer F."/>
            <person name="Land M."/>
            <person name="Hauser L."/>
            <person name="Kyrpides N."/>
            <person name="Mikhailova N."/>
            <person name="Balakrishnan V."/>
            <person name="Glasner J."/>
            <person name="Perna N.T."/>
        </authorList>
    </citation>
    <scope>NUCLEOTIDE SEQUENCE [LARGE SCALE GENOMIC DNA]</scope>
    <source>
        <strain>PC1</strain>
    </source>
</reference>
<dbReference type="EMBL" id="CP001657">
    <property type="protein sequence ID" value="ACT14448.1"/>
    <property type="molecule type" value="Genomic_DNA"/>
</dbReference>
<dbReference type="RefSeq" id="WP_010279043.1">
    <property type="nucleotide sequence ID" value="NC_012917.1"/>
</dbReference>
<dbReference type="SMR" id="C6DE12"/>
<dbReference type="STRING" id="561230.PC1_3432"/>
<dbReference type="GeneID" id="67792704"/>
<dbReference type="KEGG" id="pct:PC1_3432"/>
<dbReference type="eggNOG" id="COG0359">
    <property type="taxonomic scope" value="Bacteria"/>
</dbReference>
<dbReference type="HOGENOM" id="CLU_078938_4_1_6"/>
<dbReference type="OrthoDB" id="9788336at2"/>
<dbReference type="Proteomes" id="UP000002736">
    <property type="component" value="Chromosome"/>
</dbReference>
<dbReference type="GO" id="GO:1990904">
    <property type="term" value="C:ribonucleoprotein complex"/>
    <property type="evidence" value="ECO:0007669"/>
    <property type="project" value="UniProtKB-KW"/>
</dbReference>
<dbReference type="GO" id="GO:0005840">
    <property type="term" value="C:ribosome"/>
    <property type="evidence" value="ECO:0007669"/>
    <property type="project" value="UniProtKB-KW"/>
</dbReference>
<dbReference type="GO" id="GO:0019843">
    <property type="term" value="F:rRNA binding"/>
    <property type="evidence" value="ECO:0007669"/>
    <property type="project" value="UniProtKB-UniRule"/>
</dbReference>
<dbReference type="GO" id="GO:0003735">
    <property type="term" value="F:structural constituent of ribosome"/>
    <property type="evidence" value="ECO:0007669"/>
    <property type="project" value="InterPro"/>
</dbReference>
<dbReference type="GO" id="GO:0006412">
    <property type="term" value="P:translation"/>
    <property type="evidence" value="ECO:0007669"/>
    <property type="project" value="UniProtKB-UniRule"/>
</dbReference>
<dbReference type="FunFam" id="3.10.430.100:FF:000001">
    <property type="entry name" value="50S ribosomal protein L9"/>
    <property type="match status" value="1"/>
</dbReference>
<dbReference type="FunFam" id="3.40.5.10:FF:000001">
    <property type="entry name" value="50S ribosomal protein L9"/>
    <property type="match status" value="1"/>
</dbReference>
<dbReference type="Gene3D" id="3.10.430.100">
    <property type="entry name" value="Ribosomal protein L9, C-terminal domain"/>
    <property type="match status" value="1"/>
</dbReference>
<dbReference type="Gene3D" id="3.40.5.10">
    <property type="entry name" value="Ribosomal protein L9, N-terminal domain"/>
    <property type="match status" value="1"/>
</dbReference>
<dbReference type="HAMAP" id="MF_00503">
    <property type="entry name" value="Ribosomal_bL9"/>
    <property type="match status" value="1"/>
</dbReference>
<dbReference type="InterPro" id="IPR000244">
    <property type="entry name" value="Ribosomal_bL9"/>
</dbReference>
<dbReference type="InterPro" id="IPR009027">
    <property type="entry name" value="Ribosomal_bL9/RNase_H1_N"/>
</dbReference>
<dbReference type="InterPro" id="IPR020594">
    <property type="entry name" value="Ribosomal_bL9_bac/chp"/>
</dbReference>
<dbReference type="InterPro" id="IPR020069">
    <property type="entry name" value="Ribosomal_bL9_C"/>
</dbReference>
<dbReference type="InterPro" id="IPR036791">
    <property type="entry name" value="Ribosomal_bL9_C_sf"/>
</dbReference>
<dbReference type="InterPro" id="IPR020070">
    <property type="entry name" value="Ribosomal_bL9_N"/>
</dbReference>
<dbReference type="InterPro" id="IPR036935">
    <property type="entry name" value="Ribosomal_bL9_N_sf"/>
</dbReference>
<dbReference type="NCBIfam" id="TIGR00158">
    <property type="entry name" value="L9"/>
    <property type="match status" value="1"/>
</dbReference>
<dbReference type="PANTHER" id="PTHR21368">
    <property type="entry name" value="50S RIBOSOMAL PROTEIN L9"/>
    <property type="match status" value="1"/>
</dbReference>
<dbReference type="Pfam" id="PF03948">
    <property type="entry name" value="Ribosomal_L9_C"/>
    <property type="match status" value="1"/>
</dbReference>
<dbReference type="Pfam" id="PF01281">
    <property type="entry name" value="Ribosomal_L9_N"/>
    <property type="match status" value="1"/>
</dbReference>
<dbReference type="SUPFAM" id="SSF55658">
    <property type="entry name" value="L9 N-domain-like"/>
    <property type="match status" value="1"/>
</dbReference>
<dbReference type="SUPFAM" id="SSF55653">
    <property type="entry name" value="Ribosomal protein L9 C-domain"/>
    <property type="match status" value="1"/>
</dbReference>
<dbReference type="PROSITE" id="PS00651">
    <property type="entry name" value="RIBOSOMAL_L9"/>
    <property type="match status" value="1"/>
</dbReference>